<sequence length="107" mass="11589">MSISISDSAAQRVSAFLNHRGKGLGLRLGVRTSGCSGMAYVLEFVDEINDDDIVFEDKGVKVIIDGKSMVYLDGTELDFVKEGLNEGFKFNNPNVSNECGCGESFNV</sequence>
<feature type="chain" id="PRO_1000024381" description="Iron-binding protein IscA">
    <location>
        <begin position="1"/>
        <end position="107"/>
    </location>
</feature>
<feature type="binding site" evidence="1">
    <location>
        <position position="35"/>
    </location>
    <ligand>
        <name>Fe cation</name>
        <dbReference type="ChEBI" id="CHEBI:24875"/>
    </ligand>
</feature>
<feature type="binding site" evidence="1">
    <location>
        <position position="99"/>
    </location>
    <ligand>
        <name>Fe cation</name>
        <dbReference type="ChEBI" id="CHEBI:24875"/>
    </ligand>
</feature>
<feature type="binding site" evidence="1">
    <location>
        <position position="101"/>
    </location>
    <ligand>
        <name>Fe cation</name>
        <dbReference type="ChEBI" id="CHEBI:24875"/>
    </ligand>
</feature>
<comment type="function">
    <text evidence="1">Is able to transfer iron-sulfur clusters to apo-ferredoxin. Multiple cycles of [2Fe2S] cluster formation and transfer are observed, suggesting that IscA acts catalytically. Recruits intracellular free iron so as to provide iron for the assembly of transient iron-sulfur cluster in IscU in the presence of IscS, L-cysteine and the thioredoxin reductase system TrxA/TrxB.</text>
</comment>
<comment type="cofactor">
    <cofactor evidence="1">
        <name>Fe cation</name>
        <dbReference type="ChEBI" id="CHEBI:24875"/>
    </cofactor>
    <text evidence="1">Binds 2 iron ions per dimer. The dimer may bind additional iron ions.</text>
</comment>
<comment type="subunit">
    <text evidence="1">Homodimer; may form tetramers and higher multimers.</text>
</comment>
<comment type="similarity">
    <text evidence="1">Belongs to the HesB/IscA family.</text>
</comment>
<reference key="1">
    <citation type="journal article" date="2006" name="J. Bacteriol.">
        <title>Complete genome sequence of Yersinia pestis strains Antiqua and Nepal516: evidence of gene reduction in an emerging pathogen.</title>
        <authorList>
            <person name="Chain P.S.G."/>
            <person name="Hu P."/>
            <person name="Malfatti S.A."/>
            <person name="Radnedge L."/>
            <person name="Larimer F."/>
            <person name="Vergez L.M."/>
            <person name="Worsham P."/>
            <person name="Chu M.C."/>
            <person name="Andersen G.L."/>
        </authorList>
    </citation>
    <scope>NUCLEOTIDE SEQUENCE [LARGE SCALE GENOMIC DNA]</scope>
    <source>
        <strain>Nepal516</strain>
    </source>
</reference>
<reference key="2">
    <citation type="submission" date="2009-04" db="EMBL/GenBank/DDBJ databases">
        <title>Yersinia pestis Nepal516A whole genome shotgun sequencing project.</title>
        <authorList>
            <person name="Plunkett G. III"/>
            <person name="Anderson B.D."/>
            <person name="Baumler D.J."/>
            <person name="Burland V."/>
            <person name="Cabot E.L."/>
            <person name="Glasner J.D."/>
            <person name="Mau B."/>
            <person name="Neeno-Eckwall E."/>
            <person name="Perna N.T."/>
            <person name="Munk A.C."/>
            <person name="Tapia R."/>
            <person name="Green L.D."/>
            <person name="Rogers Y.C."/>
            <person name="Detter J.C."/>
            <person name="Bruce D.C."/>
            <person name="Brettin T.S."/>
        </authorList>
    </citation>
    <scope>NUCLEOTIDE SEQUENCE [LARGE SCALE GENOMIC DNA]</scope>
    <source>
        <strain>Nepal516</strain>
    </source>
</reference>
<evidence type="ECO:0000255" key="1">
    <source>
        <dbReference type="HAMAP-Rule" id="MF_01429"/>
    </source>
</evidence>
<name>ISCA_YERPN</name>
<keyword id="KW-0408">Iron</keyword>
<keyword id="KW-0479">Metal-binding</keyword>
<organism>
    <name type="scientific">Yersinia pestis bv. Antiqua (strain Nepal516)</name>
    <dbReference type="NCBI Taxonomy" id="377628"/>
    <lineage>
        <taxon>Bacteria</taxon>
        <taxon>Pseudomonadati</taxon>
        <taxon>Pseudomonadota</taxon>
        <taxon>Gammaproteobacteria</taxon>
        <taxon>Enterobacterales</taxon>
        <taxon>Yersiniaceae</taxon>
        <taxon>Yersinia</taxon>
    </lineage>
</organism>
<protein>
    <recommendedName>
        <fullName evidence="1">Iron-binding protein IscA</fullName>
    </recommendedName>
    <alternativeName>
        <fullName evidence="1">Iron-sulfur cluster assembly protein</fullName>
    </alternativeName>
</protein>
<proteinExistence type="inferred from homology"/>
<dbReference type="EMBL" id="CP000305">
    <property type="protein sequence ID" value="ABG17573.1"/>
    <property type="molecule type" value="Genomic_DNA"/>
</dbReference>
<dbReference type="EMBL" id="ACNQ01000008">
    <property type="protein sequence ID" value="EEO77683.1"/>
    <property type="molecule type" value="Genomic_DNA"/>
</dbReference>
<dbReference type="RefSeq" id="WP_002209834.1">
    <property type="nucleotide sequence ID" value="NZ_ACNQ01000008.1"/>
</dbReference>
<dbReference type="SMR" id="Q1CKA7"/>
<dbReference type="GeneID" id="96662216"/>
<dbReference type="KEGG" id="ypn:YPN_1243"/>
<dbReference type="HOGENOM" id="CLU_069054_5_1_6"/>
<dbReference type="Proteomes" id="UP000008936">
    <property type="component" value="Chromosome"/>
</dbReference>
<dbReference type="GO" id="GO:0005829">
    <property type="term" value="C:cytosol"/>
    <property type="evidence" value="ECO:0007669"/>
    <property type="project" value="TreeGrafter"/>
</dbReference>
<dbReference type="GO" id="GO:0051537">
    <property type="term" value="F:2 iron, 2 sulfur cluster binding"/>
    <property type="evidence" value="ECO:0007669"/>
    <property type="project" value="UniProtKB-ARBA"/>
</dbReference>
<dbReference type="GO" id="GO:0005506">
    <property type="term" value="F:iron ion binding"/>
    <property type="evidence" value="ECO:0007669"/>
    <property type="project" value="UniProtKB-UniRule"/>
</dbReference>
<dbReference type="GO" id="GO:0016226">
    <property type="term" value="P:iron-sulfur cluster assembly"/>
    <property type="evidence" value="ECO:0007669"/>
    <property type="project" value="UniProtKB-UniRule"/>
</dbReference>
<dbReference type="FunFam" id="2.60.300.12:FF:000001">
    <property type="entry name" value="Iron-binding protein IscA"/>
    <property type="match status" value="1"/>
</dbReference>
<dbReference type="Gene3D" id="2.60.300.12">
    <property type="entry name" value="HesB-like domain"/>
    <property type="match status" value="1"/>
</dbReference>
<dbReference type="HAMAP" id="MF_01429">
    <property type="entry name" value="Fe_S_insert_IscA"/>
    <property type="match status" value="1"/>
</dbReference>
<dbReference type="InterPro" id="IPR050322">
    <property type="entry name" value="Fe-S_cluster_asmbl/transfer"/>
</dbReference>
<dbReference type="InterPro" id="IPR000361">
    <property type="entry name" value="FeS_biogenesis"/>
</dbReference>
<dbReference type="InterPro" id="IPR016092">
    <property type="entry name" value="FeS_cluster_insertion"/>
</dbReference>
<dbReference type="InterPro" id="IPR017870">
    <property type="entry name" value="FeS_cluster_insertion_CS"/>
</dbReference>
<dbReference type="InterPro" id="IPR035903">
    <property type="entry name" value="HesB-like_dom_sf"/>
</dbReference>
<dbReference type="InterPro" id="IPR011302">
    <property type="entry name" value="IscA_proteobacteria"/>
</dbReference>
<dbReference type="NCBIfam" id="TIGR00049">
    <property type="entry name" value="iron-sulfur cluster assembly accessory protein"/>
    <property type="match status" value="1"/>
</dbReference>
<dbReference type="NCBIfam" id="TIGR02011">
    <property type="entry name" value="IscA"/>
    <property type="match status" value="1"/>
</dbReference>
<dbReference type="NCBIfam" id="NF007049">
    <property type="entry name" value="PRK09502.1"/>
    <property type="match status" value="1"/>
</dbReference>
<dbReference type="PANTHER" id="PTHR10072:SF41">
    <property type="entry name" value="IRON-SULFUR CLUSTER ASSEMBLY 1 HOMOLOG, MITOCHONDRIAL"/>
    <property type="match status" value="1"/>
</dbReference>
<dbReference type="PANTHER" id="PTHR10072">
    <property type="entry name" value="IRON-SULFUR CLUSTER ASSEMBLY PROTEIN"/>
    <property type="match status" value="1"/>
</dbReference>
<dbReference type="Pfam" id="PF01521">
    <property type="entry name" value="Fe-S_biosyn"/>
    <property type="match status" value="1"/>
</dbReference>
<dbReference type="SUPFAM" id="SSF89360">
    <property type="entry name" value="HesB-like domain"/>
    <property type="match status" value="1"/>
</dbReference>
<dbReference type="PROSITE" id="PS01152">
    <property type="entry name" value="HESB"/>
    <property type="match status" value="1"/>
</dbReference>
<accession>Q1CKA7</accession>
<accession>C4GRJ2</accession>
<gene>
    <name evidence="1" type="primary">iscA</name>
    <name type="ordered locus">YPN_1243</name>
    <name type="ORF">YP516_1363</name>
</gene>